<name>Y1265_RICBR</name>
<reference key="1">
    <citation type="journal article" date="2006" name="PLoS Genet.">
        <title>Genome sequence of Rickettsia bellii illuminates the role of amoebae in gene exchanges between intracellular pathogens.</title>
        <authorList>
            <person name="Ogata H."/>
            <person name="La Scola B."/>
            <person name="Audic S."/>
            <person name="Renesto P."/>
            <person name="Blanc G."/>
            <person name="Robert C."/>
            <person name="Fournier P.-E."/>
            <person name="Claverie J.-M."/>
            <person name="Raoult D."/>
        </authorList>
    </citation>
    <scope>NUCLEOTIDE SEQUENCE [LARGE SCALE GENOMIC DNA]</scope>
    <source>
        <strain>RML369-C</strain>
    </source>
</reference>
<proteinExistence type="inferred from homology"/>
<protein>
    <recommendedName>
        <fullName>Uncharacterized protein RBE_1265</fullName>
    </recommendedName>
</protein>
<organism>
    <name type="scientific">Rickettsia bellii (strain RML369-C)</name>
    <dbReference type="NCBI Taxonomy" id="336407"/>
    <lineage>
        <taxon>Bacteria</taxon>
        <taxon>Pseudomonadati</taxon>
        <taxon>Pseudomonadota</taxon>
        <taxon>Alphaproteobacteria</taxon>
        <taxon>Rickettsiales</taxon>
        <taxon>Rickettsiaceae</taxon>
        <taxon>Rickettsieae</taxon>
        <taxon>Rickettsia</taxon>
        <taxon>belli group</taxon>
    </lineage>
</organism>
<keyword id="KW-1003">Cell membrane</keyword>
<keyword id="KW-0472">Membrane</keyword>
<keyword id="KW-0732">Signal</keyword>
<keyword id="KW-0812">Transmembrane</keyword>
<keyword id="KW-1133">Transmembrane helix</keyword>
<sequence>MKLFPRTLLKILVVSFILNFGVTSKSYADDTLDTIVNTLQNLTCETQGVGDLLRTEFSQTCIVAPFFTFAIMNLVSPVLYMNTFLKLRINDNELFGTQFPGGQCTRENRADPNDLKLTFGLCSNLKLAGVRAKAVVDSALAIAKAVLTGNDPWDDIKEAWKNNKADYYNIYTQKPEDSGTMWDLGVPIFWKVVQDNDRICVGTYGFTGVVPVGCKYIKEPFPKSMYNSFMDVNDTNFIDDPNNKAVDPLALVSCSAAGGGCYQKAYNASRTAVVMTSPLIECIRQMIARLLISEDVCSFDDVNAVVNSASRQTSALFQFQVGMYRIVTAFLTLYVMLFGAKILLAGQVPPKNEYINFILKIIFVTYFSIGLNITPGSTSPYDRMDGMIQWAFPFLLNGINGLASWVMNAAPSGLCKFNGPDISYDNSVAYIALWDALDCRVAHYLGLDMLSTLLVENTYKSHNFANFDFFSFSAPPYIYLLIPAIISGNMMLVSLALAYPLLVISVAAFMVNATVMCMVSIVILGILAPLFVPMFLFDYTRGYFDSWVKLMISFLLQPMVVVTFMITMFSVYDFGFYGKCQYQSKLIHNSIEGALQGQTFKRDVLVFFVDNDWTKYSKEDAESCQNSLGYMLNNPISTAFNFAKDSVEQIVGSKPNQTCDPKAADADTKCNPKPGDSSTSSFLSKFQFLSGVILGPGMFFVSPKLLFEKIKDILLALVTACFTLYLMYNFSSQLANFAADMTEGVALSSVAIKPQAVFKAAMAALAAAGNATKGLDQFATKGGGGGDLLSTKGGRAGDLVKGSGGGGGSEGGDSFTSGGLRETSSTAATPSSALSSVGKSVGGTATPSSASEEMLDTSFSNRKPIEAPVSQPTTVSTQIDTAIKTEPPKVSAAEVVRNTAEDKLEDLSSKLNVTKEIKEAVPESQKEEPKEPRVKHTTEVEPELNLDENLGVTRTIRGLDKDRKFTEQESHELKIGEAGYVKQEMRNAQIRDRRAAFEKETEELYRSVGGRAKDKATERNDGTIENRSKKIDSGSDENP</sequence>
<gene>
    <name type="ordered locus">RBE_1265</name>
</gene>
<evidence type="ECO:0000255" key="1"/>
<evidence type="ECO:0000256" key="2">
    <source>
        <dbReference type="SAM" id="MobiDB-lite"/>
    </source>
</evidence>
<evidence type="ECO:0000305" key="3"/>
<comment type="subcellular location">
    <subcellularLocation>
        <location evidence="3">Cell membrane</location>
        <topology evidence="3">Multi-pass membrane protein</topology>
    </subcellularLocation>
</comment>
<comment type="similarity">
    <text evidence="3">Belongs to the TrbL/VirB6 family.</text>
</comment>
<feature type="signal peptide" evidence="1">
    <location>
        <begin position="1"/>
        <end position="28"/>
    </location>
</feature>
<feature type="chain" id="PRO_0000269202" description="Uncharacterized protein RBE_1265">
    <location>
        <begin position="29"/>
        <end position="1039"/>
    </location>
</feature>
<feature type="transmembrane region" description="Helical" evidence="1">
    <location>
        <begin position="326"/>
        <end position="346"/>
    </location>
</feature>
<feature type="transmembrane region" description="Helical" evidence="1">
    <location>
        <begin position="354"/>
        <end position="374"/>
    </location>
</feature>
<feature type="transmembrane region" description="Helical" evidence="1">
    <location>
        <begin position="387"/>
        <end position="407"/>
    </location>
</feature>
<feature type="transmembrane region" description="Helical" evidence="1">
    <location>
        <begin position="491"/>
        <end position="511"/>
    </location>
</feature>
<feature type="transmembrane region" description="Helical" evidence="1">
    <location>
        <begin position="517"/>
        <end position="537"/>
    </location>
</feature>
<feature type="transmembrane region" description="Helical" evidence="1">
    <location>
        <begin position="551"/>
        <end position="571"/>
    </location>
</feature>
<feature type="transmembrane region" description="Helical" evidence="1">
    <location>
        <begin position="710"/>
        <end position="730"/>
    </location>
</feature>
<feature type="region of interest" description="Disordered" evidence="2">
    <location>
        <begin position="654"/>
        <end position="680"/>
    </location>
</feature>
<feature type="region of interest" description="Disordered" evidence="2">
    <location>
        <begin position="799"/>
        <end position="875"/>
    </location>
</feature>
<feature type="region of interest" description="Disordered" evidence="2">
    <location>
        <begin position="917"/>
        <end position="949"/>
    </location>
</feature>
<feature type="region of interest" description="Disordered" evidence="2">
    <location>
        <begin position="1004"/>
        <end position="1039"/>
    </location>
</feature>
<feature type="compositionally biased region" description="Gly residues" evidence="2">
    <location>
        <begin position="802"/>
        <end position="811"/>
    </location>
</feature>
<feature type="compositionally biased region" description="Low complexity" evidence="2">
    <location>
        <begin position="812"/>
        <end position="836"/>
    </location>
</feature>
<feature type="compositionally biased region" description="Polar residues" evidence="2">
    <location>
        <begin position="843"/>
        <end position="861"/>
    </location>
</feature>
<feature type="compositionally biased region" description="Basic and acidic residues" evidence="2">
    <location>
        <begin position="917"/>
        <end position="939"/>
    </location>
</feature>
<feature type="compositionally biased region" description="Basic and acidic residues" evidence="2">
    <location>
        <begin position="1004"/>
        <end position="1033"/>
    </location>
</feature>
<accession>Q1RH18</accession>
<dbReference type="EMBL" id="CP000087">
    <property type="protein sequence ID" value="ABE05346.1"/>
    <property type="molecule type" value="Genomic_DNA"/>
</dbReference>
<dbReference type="RefSeq" id="WP_011477918.1">
    <property type="nucleotide sequence ID" value="NC_007940.1"/>
</dbReference>
<dbReference type="KEGG" id="rbe:RBE_1265"/>
<dbReference type="eggNOG" id="COG3704">
    <property type="taxonomic scope" value="Bacteria"/>
</dbReference>
<dbReference type="HOGENOM" id="CLU_279905_0_0_5"/>
<dbReference type="OrthoDB" id="7163542at2"/>
<dbReference type="Proteomes" id="UP000001951">
    <property type="component" value="Chromosome"/>
</dbReference>
<dbReference type="GO" id="GO:0005886">
    <property type="term" value="C:plasma membrane"/>
    <property type="evidence" value="ECO:0007669"/>
    <property type="project" value="UniProtKB-SubCell"/>
</dbReference>
<dbReference type="GO" id="GO:0030255">
    <property type="term" value="P:protein secretion by the type IV secretion system"/>
    <property type="evidence" value="ECO:0007669"/>
    <property type="project" value="InterPro"/>
</dbReference>
<dbReference type="InterPro" id="IPR007688">
    <property type="entry name" value="Conjugal_tfr_TrbL/VirB6"/>
</dbReference>
<dbReference type="Pfam" id="PF04610">
    <property type="entry name" value="TrbL"/>
    <property type="match status" value="1"/>
</dbReference>